<protein>
    <recommendedName>
        <fullName>Cell death protein rpr</fullName>
    </recommendedName>
    <alternativeName>
        <fullName>Protein reaper</fullName>
    </alternativeName>
</protein>
<name>RPR_DROME</name>
<keyword id="KW-0053">Apoptosis</keyword>
<keyword id="KW-1185">Reference proteome</keyword>
<evidence type="ECO:0000269" key="1">
    <source>
    </source>
</evidence>
<evidence type="ECO:0000269" key="2">
    <source>
    </source>
</evidence>
<evidence type="ECO:0000269" key="3">
    <source>
    </source>
</evidence>
<gene>
    <name type="primary">rpr</name>
    <name type="ORF">CG4319</name>
</gene>
<accession>Q24475</accession>
<accession>A0JQ43</accession>
<accession>Q4V3S2</accession>
<accession>Q9VVP7</accession>
<sequence>MAVAFYIPDQATLLREAEQKEQQILRLRESQWRFLATVVLETLRQYTSCHPKTGRKSGKYRKPSQ</sequence>
<feature type="chain" id="PRO_0000097437" description="Cell death protein rpr">
    <location>
        <begin position="1"/>
        <end position="65"/>
    </location>
</feature>
<reference key="1">
    <citation type="journal article" date="1994" name="Science">
        <title>Genetic control of programmed cell death in Drosophila.</title>
        <authorList>
            <person name="White K."/>
            <person name="Grether M.E."/>
            <person name="Abrams J.M."/>
            <person name="Young L."/>
            <person name="Farrell K."/>
            <person name="Steller H."/>
        </authorList>
    </citation>
    <scope>NUCLEOTIDE SEQUENCE [MRNA]</scope>
    <scope>FUNCTION</scope>
    <scope>DEVELOPMENTAL STAGE</scope>
    <source>
        <strain>Oregon-R</strain>
        <tissue>Eye imaginal disk</tissue>
    </source>
</reference>
<reference key="2">
    <citation type="journal article" date="2000" name="Science">
        <title>The genome sequence of Drosophila melanogaster.</title>
        <authorList>
            <person name="Adams M.D."/>
            <person name="Celniker S.E."/>
            <person name="Holt R.A."/>
            <person name="Evans C.A."/>
            <person name="Gocayne J.D."/>
            <person name="Amanatides P.G."/>
            <person name="Scherer S.E."/>
            <person name="Li P.W."/>
            <person name="Hoskins R.A."/>
            <person name="Galle R.F."/>
            <person name="George R.A."/>
            <person name="Lewis S.E."/>
            <person name="Richards S."/>
            <person name="Ashburner M."/>
            <person name="Henderson S.N."/>
            <person name="Sutton G.G."/>
            <person name="Wortman J.R."/>
            <person name="Yandell M.D."/>
            <person name="Zhang Q."/>
            <person name="Chen L.X."/>
            <person name="Brandon R.C."/>
            <person name="Rogers Y.-H.C."/>
            <person name="Blazej R.G."/>
            <person name="Champe M."/>
            <person name="Pfeiffer B.D."/>
            <person name="Wan K.H."/>
            <person name="Doyle C."/>
            <person name="Baxter E.G."/>
            <person name="Helt G."/>
            <person name="Nelson C.R."/>
            <person name="Miklos G.L.G."/>
            <person name="Abril J.F."/>
            <person name="Agbayani A."/>
            <person name="An H.-J."/>
            <person name="Andrews-Pfannkoch C."/>
            <person name="Baldwin D."/>
            <person name="Ballew R.M."/>
            <person name="Basu A."/>
            <person name="Baxendale J."/>
            <person name="Bayraktaroglu L."/>
            <person name="Beasley E.M."/>
            <person name="Beeson K.Y."/>
            <person name="Benos P.V."/>
            <person name="Berman B.P."/>
            <person name="Bhandari D."/>
            <person name="Bolshakov S."/>
            <person name="Borkova D."/>
            <person name="Botchan M.R."/>
            <person name="Bouck J."/>
            <person name="Brokstein P."/>
            <person name="Brottier P."/>
            <person name="Burtis K.C."/>
            <person name="Busam D.A."/>
            <person name="Butler H."/>
            <person name="Cadieu E."/>
            <person name="Center A."/>
            <person name="Chandra I."/>
            <person name="Cherry J.M."/>
            <person name="Cawley S."/>
            <person name="Dahlke C."/>
            <person name="Davenport L.B."/>
            <person name="Davies P."/>
            <person name="de Pablos B."/>
            <person name="Delcher A."/>
            <person name="Deng Z."/>
            <person name="Mays A.D."/>
            <person name="Dew I."/>
            <person name="Dietz S.M."/>
            <person name="Dodson K."/>
            <person name="Doup L.E."/>
            <person name="Downes M."/>
            <person name="Dugan-Rocha S."/>
            <person name="Dunkov B.C."/>
            <person name="Dunn P."/>
            <person name="Durbin K.J."/>
            <person name="Evangelista C.C."/>
            <person name="Ferraz C."/>
            <person name="Ferriera S."/>
            <person name="Fleischmann W."/>
            <person name="Fosler C."/>
            <person name="Gabrielian A.E."/>
            <person name="Garg N.S."/>
            <person name="Gelbart W.M."/>
            <person name="Glasser K."/>
            <person name="Glodek A."/>
            <person name="Gong F."/>
            <person name="Gorrell J.H."/>
            <person name="Gu Z."/>
            <person name="Guan P."/>
            <person name="Harris M."/>
            <person name="Harris N.L."/>
            <person name="Harvey D.A."/>
            <person name="Heiman T.J."/>
            <person name="Hernandez J.R."/>
            <person name="Houck J."/>
            <person name="Hostin D."/>
            <person name="Houston K.A."/>
            <person name="Howland T.J."/>
            <person name="Wei M.-H."/>
            <person name="Ibegwam C."/>
            <person name="Jalali M."/>
            <person name="Kalush F."/>
            <person name="Karpen G.H."/>
            <person name="Ke Z."/>
            <person name="Kennison J.A."/>
            <person name="Ketchum K.A."/>
            <person name="Kimmel B.E."/>
            <person name="Kodira C.D."/>
            <person name="Kraft C.L."/>
            <person name="Kravitz S."/>
            <person name="Kulp D."/>
            <person name="Lai Z."/>
            <person name="Lasko P."/>
            <person name="Lei Y."/>
            <person name="Levitsky A.A."/>
            <person name="Li J.H."/>
            <person name="Li Z."/>
            <person name="Liang Y."/>
            <person name="Lin X."/>
            <person name="Liu X."/>
            <person name="Mattei B."/>
            <person name="McIntosh T.C."/>
            <person name="McLeod M.P."/>
            <person name="McPherson D."/>
            <person name="Merkulov G."/>
            <person name="Milshina N.V."/>
            <person name="Mobarry C."/>
            <person name="Morris J."/>
            <person name="Moshrefi A."/>
            <person name="Mount S.M."/>
            <person name="Moy M."/>
            <person name="Murphy B."/>
            <person name="Murphy L."/>
            <person name="Muzny D.M."/>
            <person name="Nelson D.L."/>
            <person name="Nelson D.R."/>
            <person name="Nelson K.A."/>
            <person name="Nixon K."/>
            <person name="Nusskern D.R."/>
            <person name="Pacleb J.M."/>
            <person name="Palazzolo M."/>
            <person name="Pittman G.S."/>
            <person name="Pan S."/>
            <person name="Pollard J."/>
            <person name="Puri V."/>
            <person name="Reese M.G."/>
            <person name="Reinert K."/>
            <person name="Remington K."/>
            <person name="Saunders R.D.C."/>
            <person name="Scheeler F."/>
            <person name="Shen H."/>
            <person name="Shue B.C."/>
            <person name="Siden-Kiamos I."/>
            <person name="Simpson M."/>
            <person name="Skupski M.P."/>
            <person name="Smith T.J."/>
            <person name="Spier E."/>
            <person name="Spradling A.C."/>
            <person name="Stapleton M."/>
            <person name="Strong R."/>
            <person name="Sun E."/>
            <person name="Svirskas R."/>
            <person name="Tector C."/>
            <person name="Turner R."/>
            <person name="Venter E."/>
            <person name="Wang A.H."/>
            <person name="Wang X."/>
            <person name="Wang Z.-Y."/>
            <person name="Wassarman D.A."/>
            <person name="Weinstock G.M."/>
            <person name="Weissenbach J."/>
            <person name="Williams S.M."/>
            <person name="Woodage T."/>
            <person name="Worley K.C."/>
            <person name="Wu D."/>
            <person name="Yang S."/>
            <person name="Yao Q.A."/>
            <person name="Ye J."/>
            <person name="Yeh R.-F."/>
            <person name="Zaveri J.S."/>
            <person name="Zhan M."/>
            <person name="Zhang G."/>
            <person name="Zhao Q."/>
            <person name="Zheng L."/>
            <person name="Zheng X.H."/>
            <person name="Zhong F.N."/>
            <person name="Zhong W."/>
            <person name="Zhou X."/>
            <person name="Zhu S.C."/>
            <person name="Zhu X."/>
            <person name="Smith H.O."/>
            <person name="Gibbs R.A."/>
            <person name="Myers E.W."/>
            <person name="Rubin G.M."/>
            <person name="Venter J.C."/>
        </authorList>
    </citation>
    <scope>NUCLEOTIDE SEQUENCE [LARGE SCALE GENOMIC DNA]</scope>
    <source>
        <strain>Berkeley</strain>
    </source>
</reference>
<reference key="3">
    <citation type="journal article" date="2002" name="Genome Biol.">
        <title>Annotation of the Drosophila melanogaster euchromatic genome: a systematic review.</title>
        <authorList>
            <person name="Misra S."/>
            <person name="Crosby M.A."/>
            <person name="Mungall C.J."/>
            <person name="Matthews B.B."/>
            <person name="Campbell K.S."/>
            <person name="Hradecky P."/>
            <person name="Huang Y."/>
            <person name="Kaminker J.S."/>
            <person name="Millburn G.H."/>
            <person name="Prochnik S.E."/>
            <person name="Smith C.D."/>
            <person name="Tupy J.L."/>
            <person name="Whitfield E.J."/>
            <person name="Bayraktaroglu L."/>
            <person name="Berman B.P."/>
            <person name="Bettencourt B.R."/>
            <person name="Celniker S.E."/>
            <person name="de Grey A.D.N.J."/>
            <person name="Drysdale R.A."/>
            <person name="Harris N.L."/>
            <person name="Richter J."/>
            <person name="Russo S."/>
            <person name="Schroeder A.J."/>
            <person name="Shu S.Q."/>
            <person name="Stapleton M."/>
            <person name="Yamada C."/>
            <person name="Ashburner M."/>
            <person name="Gelbart W.M."/>
            <person name="Rubin G.M."/>
            <person name="Lewis S.E."/>
        </authorList>
    </citation>
    <scope>GENOME REANNOTATION</scope>
    <source>
        <strain>Berkeley</strain>
    </source>
</reference>
<reference key="4">
    <citation type="submission" date="2006-11" db="EMBL/GenBank/DDBJ databases">
        <authorList>
            <person name="Stapleton M."/>
            <person name="Carlson J.W."/>
            <person name="Chavez C."/>
            <person name="Frise E."/>
            <person name="George R.A."/>
            <person name="Kapadia B."/>
            <person name="Pacleb J.M."/>
            <person name="Park S."/>
            <person name="Wan K.H."/>
            <person name="Yu C."/>
            <person name="Celniker S.E."/>
        </authorList>
    </citation>
    <scope>NUCLEOTIDE SEQUENCE [LARGE SCALE MRNA]</scope>
    <source>
        <strain>Berkeley</strain>
    </source>
</reference>
<reference key="5">
    <citation type="journal article" date="1998" name="Dev. Biol.">
        <title>Dredd, a novel effector of the apoptosis activators reaper, grim, and hid in Drosophila.</title>
        <authorList>
            <person name="Chen P."/>
            <person name="Rodriguez A."/>
            <person name="Erskine R."/>
            <person name="Thach T."/>
            <person name="Abrams J.M."/>
        </authorList>
    </citation>
    <scope>FUNCTION</scope>
    <source>
        <tissue>Embryo</tissue>
    </source>
</reference>
<reference key="6">
    <citation type="journal article" date="2007" name="J. Cell Biol.">
        <title>DIAP2 functions as a mechanism-based regulator of drICE that contributes to the caspase activity threshold in living cells.</title>
        <authorList>
            <person name="Ribeiro P.S."/>
            <person name="Kuranaga E."/>
            <person name="Tenev T."/>
            <person name="Leulier F."/>
            <person name="Miura M."/>
            <person name="Meier P."/>
        </authorList>
    </citation>
    <scope>INTERACTION WITH DIAP2</scope>
</reference>
<proteinExistence type="evidence at protein level"/>
<dbReference type="EMBL" id="L31631">
    <property type="protein sequence ID" value="AAA18983.1"/>
    <property type="molecule type" value="mRNA"/>
</dbReference>
<dbReference type="EMBL" id="AE014296">
    <property type="protein sequence ID" value="AAF49264.1"/>
    <property type="molecule type" value="Genomic_DNA"/>
</dbReference>
<dbReference type="EMBL" id="BT023284">
    <property type="protein sequence ID" value="AAY55700.1"/>
    <property type="molecule type" value="mRNA"/>
</dbReference>
<dbReference type="EMBL" id="BT029413">
    <property type="protein sequence ID" value="ABK57070.1"/>
    <property type="molecule type" value="mRNA"/>
</dbReference>
<dbReference type="RefSeq" id="NP_524138.1">
    <property type="nucleotide sequence ID" value="NM_079414.3"/>
</dbReference>
<dbReference type="SMR" id="Q24475"/>
<dbReference type="BioGRID" id="65299">
    <property type="interactions" value="95"/>
</dbReference>
<dbReference type="DIP" id="DIP-21897N"/>
<dbReference type="ELM" id="Q24475"/>
<dbReference type="FunCoup" id="Q24475">
    <property type="interactions" value="3"/>
</dbReference>
<dbReference type="IntAct" id="Q24475">
    <property type="interactions" value="3"/>
</dbReference>
<dbReference type="STRING" id="7227.FBpp0074886"/>
<dbReference type="PaxDb" id="7227-FBpp0074886"/>
<dbReference type="DNASU" id="40015"/>
<dbReference type="EnsemblMetazoa" id="FBtr0075120">
    <property type="protein sequence ID" value="FBpp0074886"/>
    <property type="gene ID" value="FBgn0011706"/>
</dbReference>
<dbReference type="GeneID" id="40015"/>
<dbReference type="KEGG" id="dme:Dmel_CG4319"/>
<dbReference type="AGR" id="FB:FBgn0011706"/>
<dbReference type="CTD" id="40015"/>
<dbReference type="FlyBase" id="FBgn0011706">
    <property type="gene designation" value="rpr"/>
</dbReference>
<dbReference type="VEuPathDB" id="VectorBase:FBgn0011706"/>
<dbReference type="eggNOG" id="ENOG502TCC9">
    <property type="taxonomic scope" value="Eukaryota"/>
</dbReference>
<dbReference type="HOGENOM" id="CLU_2851998_0_0_1"/>
<dbReference type="InParanoid" id="Q24475"/>
<dbReference type="OMA" id="RESQWRF"/>
<dbReference type="OrthoDB" id="7966007at2759"/>
<dbReference type="PhylomeDB" id="Q24475"/>
<dbReference type="SignaLink" id="Q24475"/>
<dbReference type="BioGRID-ORCS" id="40015">
    <property type="hits" value="0 hits in 1 CRISPR screen"/>
</dbReference>
<dbReference type="ChiTaRS" id="rpr">
    <property type="organism name" value="fly"/>
</dbReference>
<dbReference type="GenomeRNAi" id="40015"/>
<dbReference type="PRO" id="PR:Q24475"/>
<dbReference type="Proteomes" id="UP000000803">
    <property type="component" value="Chromosome 3L"/>
</dbReference>
<dbReference type="Bgee" id="FBgn0011706">
    <property type="expression patterns" value="Expressed in saliva-secreting gland and 48 other cell types or tissues"/>
</dbReference>
<dbReference type="GO" id="GO:0005741">
    <property type="term" value="C:mitochondrial outer membrane"/>
    <property type="evidence" value="ECO:0000314"/>
    <property type="project" value="FlyBase"/>
</dbReference>
<dbReference type="GO" id="GO:0005739">
    <property type="term" value="C:mitochondrion"/>
    <property type="evidence" value="ECO:0000314"/>
    <property type="project" value="FlyBase"/>
</dbReference>
<dbReference type="GO" id="GO:0005543">
    <property type="term" value="F:phospholipid binding"/>
    <property type="evidence" value="ECO:0000314"/>
    <property type="project" value="FlyBase"/>
</dbReference>
<dbReference type="GO" id="GO:0042803">
    <property type="term" value="F:protein homodimerization activity"/>
    <property type="evidence" value="ECO:0000314"/>
    <property type="project" value="FlyBase"/>
</dbReference>
<dbReference type="GO" id="GO:0031624">
    <property type="term" value="F:ubiquitin conjugating enzyme binding"/>
    <property type="evidence" value="ECO:0000353"/>
    <property type="project" value="FlyBase"/>
</dbReference>
<dbReference type="GO" id="GO:1990948">
    <property type="term" value="F:ubiquitin ligase inhibitor activity"/>
    <property type="evidence" value="ECO:0000314"/>
    <property type="project" value="FlyBase"/>
</dbReference>
<dbReference type="GO" id="GO:0031625">
    <property type="term" value="F:ubiquitin protein ligase binding"/>
    <property type="evidence" value="ECO:0000353"/>
    <property type="project" value="FlyBase"/>
</dbReference>
<dbReference type="GO" id="GO:0006915">
    <property type="term" value="P:apoptotic process"/>
    <property type="evidence" value="ECO:0000314"/>
    <property type="project" value="FlyBase"/>
</dbReference>
<dbReference type="GO" id="GO:0097190">
    <property type="term" value="P:apoptotic signaling pathway"/>
    <property type="evidence" value="ECO:0000315"/>
    <property type="project" value="FlyBase"/>
</dbReference>
<dbReference type="GO" id="GO:0048102">
    <property type="term" value="P:autophagic cell death"/>
    <property type="evidence" value="ECO:0000316"/>
    <property type="project" value="FlyBase"/>
</dbReference>
<dbReference type="GO" id="GO:0071480">
    <property type="term" value="P:cellular response to gamma radiation"/>
    <property type="evidence" value="ECO:0000315"/>
    <property type="project" value="FlyBase"/>
</dbReference>
<dbReference type="GO" id="GO:0071479">
    <property type="term" value="P:cellular response to ionizing radiation"/>
    <property type="evidence" value="ECO:0000314"/>
    <property type="project" value="FlyBase"/>
</dbReference>
<dbReference type="GO" id="GO:0048803">
    <property type="term" value="P:imaginal disc-derived male genitalia morphogenesis"/>
    <property type="evidence" value="ECO:0000315"/>
    <property type="project" value="FlyBase"/>
</dbReference>
<dbReference type="GO" id="GO:0008630">
    <property type="term" value="P:intrinsic apoptotic signaling pathway in response to DNA damage"/>
    <property type="evidence" value="ECO:0000315"/>
    <property type="project" value="FlyBase"/>
</dbReference>
<dbReference type="GO" id="GO:0035193">
    <property type="term" value="P:larval central nervous system remodeling"/>
    <property type="evidence" value="ECO:0000304"/>
    <property type="project" value="FlyBase"/>
</dbReference>
<dbReference type="GO" id="GO:0035096">
    <property type="term" value="P:larval midgut cell programmed cell death"/>
    <property type="evidence" value="ECO:0000316"/>
    <property type="project" value="FlyBase"/>
</dbReference>
<dbReference type="GO" id="GO:0051402">
    <property type="term" value="P:neuron apoptotic process"/>
    <property type="evidence" value="ECO:0000315"/>
    <property type="project" value="FlyBase"/>
</dbReference>
<dbReference type="GO" id="GO:0043065">
    <property type="term" value="P:positive regulation of apoptotic process"/>
    <property type="evidence" value="ECO:0000314"/>
    <property type="project" value="FlyBase"/>
</dbReference>
<dbReference type="GO" id="GO:0046330">
    <property type="term" value="P:positive regulation of JNK cascade"/>
    <property type="evidence" value="ECO:0000314"/>
    <property type="project" value="FlyBase"/>
</dbReference>
<dbReference type="GO" id="GO:0031398">
    <property type="term" value="P:positive regulation of protein ubiquitination"/>
    <property type="evidence" value="ECO:0000314"/>
    <property type="project" value="FlyBase"/>
</dbReference>
<dbReference type="GO" id="GO:2000060">
    <property type="term" value="P:positive regulation of ubiquitin-dependent protein catabolic process"/>
    <property type="evidence" value="ECO:0000316"/>
    <property type="project" value="FlyBase"/>
</dbReference>
<dbReference type="GO" id="GO:0012501">
    <property type="term" value="P:programmed cell death"/>
    <property type="evidence" value="ECO:0000315"/>
    <property type="project" value="FlyBase"/>
</dbReference>
<dbReference type="GO" id="GO:0042176">
    <property type="term" value="P:regulation of protein catabolic process"/>
    <property type="evidence" value="ECO:0000314"/>
    <property type="project" value="FlyBase"/>
</dbReference>
<dbReference type="GO" id="GO:0035075">
    <property type="term" value="P:response to ecdysone"/>
    <property type="evidence" value="ECO:0000315"/>
    <property type="project" value="FlyBase"/>
</dbReference>
<organism>
    <name type="scientific">Drosophila melanogaster</name>
    <name type="common">Fruit fly</name>
    <dbReference type="NCBI Taxonomy" id="7227"/>
    <lineage>
        <taxon>Eukaryota</taxon>
        <taxon>Metazoa</taxon>
        <taxon>Ecdysozoa</taxon>
        <taxon>Arthropoda</taxon>
        <taxon>Hexapoda</taxon>
        <taxon>Insecta</taxon>
        <taxon>Pterygota</taxon>
        <taxon>Neoptera</taxon>
        <taxon>Endopterygota</taxon>
        <taxon>Diptera</taxon>
        <taxon>Brachycera</taxon>
        <taxon>Muscomorpha</taxon>
        <taxon>Ephydroidea</taxon>
        <taxon>Drosophilidae</taxon>
        <taxon>Drosophila</taxon>
        <taxon>Sophophora</taxon>
    </lineage>
</organism>
<comment type="function">
    <text evidence="2 3">Activator of apoptosis, as well as grim and hid, that acts on the effector Dredd.</text>
</comment>
<comment type="subunit">
    <text evidence="1">Interacts with Diap2 (via BIR2 domain).</text>
</comment>
<comment type="interaction">
    <interactant intactId="EBI-106786">
        <id>Q24475</id>
    </interactant>
    <interactant intactId="EBI-456419">
        <id>Q24306</id>
        <label>Diap1</label>
    </interactant>
    <organismsDiffer>false</organismsDiffer>
    <experiments>8</experiments>
</comment>
<comment type="interaction">
    <interactant intactId="EBI-106786">
        <id>Q24475</id>
    </interactant>
    <interactant intactId="EBI-112046">
        <id>Q24307</id>
        <label>Diap2</label>
    </interactant>
    <organismsDiffer>false</organismsDiffer>
    <experiments>3</experiments>
</comment>
<comment type="developmental stage">
    <text evidence="2">Expression coincides with the onset of programmed cell death (PCD) at all stages of embryonic development.</text>
</comment>
<comment type="miscellaneous">
    <text>Ectopic expression in the developing eye results in a small eye owing to excess cell death.</text>
</comment>